<keyword id="KW-0687">Ribonucleoprotein</keyword>
<keyword id="KW-0689">Ribosomal protein</keyword>
<keyword id="KW-0694">RNA-binding</keyword>
<keyword id="KW-0699">rRNA-binding</keyword>
<comment type="function">
    <text evidence="1">Binds to the 23S rRNA.</text>
</comment>
<comment type="similarity">
    <text evidence="1">Belongs to the bacterial ribosomal protein bL9 family.</text>
</comment>
<name>RL9_PSECP</name>
<proteinExistence type="inferred from homology"/>
<evidence type="ECO:0000255" key="1">
    <source>
        <dbReference type="HAMAP-Rule" id="MF_00503"/>
    </source>
</evidence>
<evidence type="ECO:0000305" key="2"/>
<feature type="chain" id="PRO_1000196220" description="Large ribosomal subunit protein bL9">
    <location>
        <begin position="1"/>
        <end position="150"/>
    </location>
</feature>
<reference key="1">
    <citation type="submission" date="2009-01" db="EMBL/GenBank/DDBJ databases">
        <title>Complete sequence of chromosome of Arthrobacter chlorophenolicus A6.</title>
        <authorList>
            <consortium name="US DOE Joint Genome Institute"/>
            <person name="Lucas S."/>
            <person name="Copeland A."/>
            <person name="Lapidus A."/>
            <person name="Glavina del Rio T."/>
            <person name="Tice H."/>
            <person name="Bruce D."/>
            <person name="Goodwin L."/>
            <person name="Pitluck S."/>
            <person name="Goltsman E."/>
            <person name="Clum A."/>
            <person name="Larimer F."/>
            <person name="Land M."/>
            <person name="Hauser L."/>
            <person name="Kyrpides N."/>
            <person name="Mikhailova N."/>
            <person name="Jansson J."/>
            <person name="Richardson P."/>
        </authorList>
    </citation>
    <scope>NUCLEOTIDE SEQUENCE [LARGE SCALE GENOMIC DNA]</scope>
    <source>
        <strain>ATCC 700700 / DSM 12829 / CIP 107037 / JCM 12360 / KCTC 9906 / NCIMB 13794 / A6</strain>
    </source>
</reference>
<sequence length="150" mass="15892">MAKLILTHEVTGLGAAGDVVEVKDGYARNFLLPRNFALTWTKGGEKQVESIKAARAAREHASLEDAQKQAAALQSKPVQLVVKAGETGRLFGTVKQADVANAVEAAGLGSIDKRKVELPVHIKSVGSYQANVRLHEDVAAVIELDVVAGK</sequence>
<organism>
    <name type="scientific">Pseudarthrobacter chlorophenolicus (strain ATCC 700700 / DSM 12829 / CIP 107037 / JCM 12360 / KCTC 9906 / NCIMB 13794 / A6)</name>
    <name type="common">Arthrobacter chlorophenolicus</name>
    <dbReference type="NCBI Taxonomy" id="452863"/>
    <lineage>
        <taxon>Bacteria</taxon>
        <taxon>Bacillati</taxon>
        <taxon>Actinomycetota</taxon>
        <taxon>Actinomycetes</taxon>
        <taxon>Micrococcales</taxon>
        <taxon>Micrococcaceae</taxon>
        <taxon>Pseudarthrobacter</taxon>
    </lineage>
</organism>
<accession>B8H838</accession>
<protein>
    <recommendedName>
        <fullName evidence="1">Large ribosomal subunit protein bL9</fullName>
    </recommendedName>
    <alternativeName>
        <fullName evidence="2">50S ribosomal protein L9</fullName>
    </alternativeName>
</protein>
<dbReference type="EMBL" id="CP001341">
    <property type="protein sequence ID" value="ACL41841.1"/>
    <property type="molecule type" value="Genomic_DNA"/>
</dbReference>
<dbReference type="RefSeq" id="WP_015939034.1">
    <property type="nucleotide sequence ID" value="NC_011886.1"/>
</dbReference>
<dbReference type="SMR" id="B8H838"/>
<dbReference type="STRING" id="452863.Achl_3888"/>
<dbReference type="KEGG" id="ach:Achl_3888"/>
<dbReference type="eggNOG" id="COG0359">
    <property type="taxonomic scope" value="Bacteria"/>
</dbReference>
<dbReference type="HOGENOM" id="CLU_078938_5_1_11"/>
<dbReference type="OrthoDB" id="9788336at2"/>
<dbReference type="Proteomes" id="UP000002505">
    <property type="component" value="Chromosome"/>
</dbReference>
<dbReference type="GO" id="GO:1990904">
    <property type="term" value="C:ribonucleoprotein complex"/>
    <property type="evidence" value="ECO:0007669"/>
    <property type="project" value="UniProtKB-KW"/>
</dbReference>
<dbReference type="GO" id="GO:0005840">
    <property type="term" value="C:ribosome"/>
    <property type="evidence" value="ECO:0007669"/>
    <property type="project" value="UniProtKB-KW"/>
</dbReference>
<dbReference type="GO" id="GO:0019843">
    <property type="term" value="F:rRNA binding"/>
    <property type="evidence" value="ECO:0007669"/>
    <property type="project" value="UniProtKB-UniRule"/>
</dbReference>
<dbReference type="GO" id="GO:0003735">
    <property type="term" value="F:structural constituent of ribosome"/>
    <property type="evidence" value="ECO:0007669"/>
    <property type="project" value="InterPro"/>
</dbReference>
<dbReference type="GO" id="GO:0006412">
    <property type="term" value="P:translation"/>
    <property type="evidence" value="ECO:0007669"/>
    <property type="project" value="UniProtKB-UniRule"/>
</dbReference>
<dbReference type="FunFam" id="3.40.5.10:FF:000003">
    <property type="entry name" value="50S ribosomal protein L9"/>
    <property type="match status" value="1"/>
</dbReference>
<dbReference type="Gene3D" id="3.10.430.100">
    <property type="entry name" value="Ribosomal protein L9, C-terminal domain"/>
    <property type="match status" value="1"/>
</dbReference>
<dbReference type="Gene3D" id="3.40.5.10">
    <property type="entry name" value="Ribosomal protein L9, N-terminal domain"/>
    <property type="match status" value="1"/>
</dbReference>
<dbReference type="HAMAP" id="MF_00503">
    <property type="entry name" value="Ribosomal_bL9"/>
    <property type="match status" value="1"/>
</dbReference>
<dbReference type="InterPro" id="IPR000244">
    <property type="entry name" value="Ribosomal_bL9"/>
</dbReference>
<dbReference type="InterPro" id="IPR009027">
    <property type="entry name" value="Ribosomal_bL9/RNase_H1_N"/>
</dbReference>
<dbReference type="InterPro" id="IPR020594">
    <property type="entry name" value="Ribosomal_bL9_bac/chp"/>
</dbReference>
<dbReference type="InterPro" id="IPR020069">
    <property type="entry name" value="Ribosomal_bL9_C"/>
</dbReference>
<dbReference type="InterPro" id="IPR036791">
    <property type="entry name" value="Ribosomal_bL9_C_sf"/>
</dbReference>
<dbReference type="InterPro" id="IPR020070">
    <property type="entry name" value="Ribosomal_bL9_N"/>
</dbReference>
<dbReference type="InterPro" id="IPR036935">
    <property type="entry name" value="Ribosomal_bL9_N_sf"/>
</dbReference>
<dbReference type="NCBIfam" id="TIGR00158">
    <property type="entry name" value="L9"/>
    <property type="match status" value="1"/>
</dbReference>
<dbReference type="PANTHER" id="PTHR21368">
    <property type="entry name" value="50S RIBOSOMAL PROTEIN L9"/>
    <property type="match status" value="1"/>
</dbReference>
<dbReference type="Pfam" id="PF03948">
    <property type="entry name" value="Ribosomal_L9_C"/>
    <property type="match status" value="1"/>
</dbReference>
<dbReference type="Pfam" id="PF01281">
    <property type="entry name" value="Ribosomal_L9_N"/>
    <property type="match status" value="1"/>
</dbReference>
<dbReference type="SUPFAM" id="SSF55658">
    <property type="entry name" value="L9 N-domain-like"/>
    <property type="match status" value="1"/>
</dbReference>
<dbReference type="SUPFAM" id="SSF55653">
    <property type="entry name" value="Ribosomal protein L9 C-domain"/>
    <property type="match status" value="1"/>
</dbReference>
<dbReference type="PROSITE" id="PS00651">
    <property type="entry name" value="RIBOSOMAL_L9"/>
    <property type="match status" value="1"/>
</dbReference>
<gene>
    <name evidence="1" type="primary">rplI</name>
    <name type="ordered locus">Achl_3888</name>
</gene>